<dbReference type="EMBL" id="CP000266">
    <property type="protein sequence ID" value="ABF02456.1"/>
    <property type="molecule type" value="Genomic_DNA"/>
</dbReference>
<dbReference type="RefSeq" id="WP_000417058.1">
    <property type="nucleotide sequence ID" value="NC_008258.1"/>
</dbReference>
<dbReference type="SMR" id="Q0T820"/>
<dbReference type="KEGG" id="sfv:SFV_0173"/>
<dbReference type="HOGENOM" id="CLU_190008_0_0_6"/>
<dbReference type="Proteomes" id="UP000000659">
    <property type="component" value="Chromosome"/>
</dbReference>
<dbReference type="HAMAP" id="MF_01064">
    <property type="entry name" value="UPF0253"/>
    <property type="match status" value="1"/>
</dbReference>
<dbReference type="InterPro" id="IPR009624">
    <property type="entry name" value="UPF0253"/>
</dbReference>
<dbReference type="NCBIfam" id="NF003436">
    <property type="entry name" value="PRK04964.1"/>
    <property type="match status" value="1"/>
</dbReference>
<dbReference type="Pfam" id="PF06786">
    <property type="entry name" value="UPF0253"/>
    <property type="match status" value="1"/>
</dbReference>
<gene>
    <name evidence="1" type="primary">yaeP</name>
    <name type="ordered locus">SFV_0173</name>
</gene>
<sequence>MEKYCELIRKRYAEIASGDLGYVPDALGCVLKVLNEMAADDALSEAVREKAAYAAANLLVSDYVNE</sequence>
<feature type="chain" id="PRO_0000277525" description="UPF0253 protein YaeP">
    <location>
        <begin position="1"/>
        <end position="66"/>
    </location>
</feature>
<accession>Q0T820</accession>
<organism>
    <name type="scientific">Shigella flexneri serotype 5b (strain 8401)</name>
    <dbReference type="NCBI Taxonomy" id="373384"/>
    <lineage>
        <taxon>Bacteria</taxon>
        <taxon>Pseudomonadati</taxon>
        <taxon>Pseudomonadota</taxon>
        <taxon>Gammaproteobacteria</taxon>
        <taxon>Enterobacterales</taxon>
        <taxon>Enterobacteriaceae</taxon>
        <taxon>Shigella</taxon>
    </lineage>
</organism>
<name>YAEP_SHIF8</name>
<reference key="1">
    <citation type="journal article" date="2006" name="BMC Genomics">
        <title>Complete genome sequence of Shigella flexneri 5b and comparison with Shigella flexneri 2a.</title>
        <authorList>
            <person name="Nie H."/>
            <person name="Yang F."/>
            <person name="Zhang X."/>
            <person name="Yang J."/>
            <person name="Chen L."/>
            <person name="Wang J."/>
            <person name="Xiong Z."/>
            <person name="Peng J."/>
            <person name="Sun L."/>
            <person name="Dong J."/>
            <person name="Xue Y."/>
            <person name="Xu X."/>
            <person name="Chen S."/>
            <person name="Yao Z."/>
            <person name="Shen Y."/>
            <person name="Jin Q."/>
        </authorList>
    </citation>
    <scope>NUCLEOTIDE SEQUENCE [LARGE SCALE GENOMIC DNA]</scope>
    <source>
        <strain>8401</strain>
    </source>
</reference>
<comment type="similarity">
    <text evidence="1">Belongs to the UPF0253 family.</text>
</comment>
<evidence type="ECO:0000255" key="1">
    <source>
        <dbReference type="HAMAP-Rule" id="MF_01064"/>
    </source>
</evidence>
<proteinExistence type="inferred from homology"/>
<protein>
    <recommendedName>
        <fullName evidence="1">UPF0253 protein YaeP</fullName>
    </recommendedName>
</protein>